<reference key="1">
    <citation type="submission" date="2006-12" db="EMBL/GenBank/DDBJ databases">
        <title>Complete sequence of chromosome 2 of Paracoccus denitrificans PD1222.</title>
        <authorList>
            <person name="Copeland A."/>
            <person name="Lucas S."/>
            <person name="Lapidus A."/>
            <person name="Barry K."/>
            <person name="Detter J.C."/>
            <person name="Glavina del Rio T."/>
            <person name="Hammon N."/>
            <person name="Israni S."/>
            <person name="Dalin E."/>
            <person name="Tice H."/>
            <person name="Pitluck S."/>
            <person name="Munk A.C."/>
            <person name="Brettin T."/>
            <person name="Bruce D."/>
            <person name="Han C."/>
            <person name="Tapia R."/>
            <person name="Gilna P."/>
            <person name="Schmutz J."/>
            <person name="Larimer F."/>
            <person name="Land M."/>
            <person name="Hauser L."/>
            <person name="Kyrpides N."/>
            <person name="Lykidis A."/>
            <person name="Spiro S."/>
            <person name="Richardson D.J."/>
            <person name="Moir J.W.B."/>
            <person name="Ferguson S.J."/>
            <person name="van Spanning R.J.M."/>
            <person name="Richardson P."/>
        </authorList>
    </citation>
    <scope>NUCLEOTIDE SEQUENCE [LARGE SCALE GENOMIC DNA]</scope>
    <source>
        <strain>Pd 1222</strain>
    </source>
</reference>
<evidence type="ECO:0000255" key="1">
    <source>
        <dbReference type="HAMAP-Rule" id="MF_00453"/>
    </source>
</evidence>
<keyword id="KW-0067">ATP-binding</keyword>
<keyword id="KW-0963">Cytoplasm</keyword>
<keyword id="KW-0210">Decarboxylase</keyword>
<keyword id="KW-0312">Gluconeogenesis</keyword>
<keyword id="KW-0456">Lyase</keyword>
<keyword id="KW-0464">Manganese</keyword>
<keyword id="KW-0479">Metal-binding</keyword>
<keyword id="KW-0547">Nucleotide-binding</keyword>
<keyword id="KW-1185">Reference proteome</keyword>
<name>PCKA_PARDP</name>
<proteinExistence type="inferred from homology"/>
<organism>
    <name type="scientific">Paracoccus denitrificans (strain Pd 1222)</name>
    <dbReference type="NCBI Taxonomy" id="318586"/>
    <lineage>
        <taxon>Bacteria</taxon>
        <taxon>Pseudomonadati</taxon>
        <taxon>Pseudomonadota</taxon>
        <taxon>Alphaproteobacteria</taxon>
        <taxon>Rhodobacterales</taxon>
        <taxon>Paracoccaceae</taxon>
        <taxon>Paracoccus</taxon>
    </lineage>
</organism>
<comment type="function">
    <text evidence="1">Involved in the gluconeogenesis. Catalyzes the conversion of oxaloacetate (OAA) to phosphoenolpyruvate (PEP) through direct phosphoryl transfer between the nucleoside triphosphate and OAA.</text>
</comment>
<comment type="catalytic activity">
    <reaction evidence="1">
        <text>oxaloacetate + ATP = phosphoenolpyruvate + ADP + CO2</text>
        <dbReference type="Rhea" id="RHEA:18617"/>
        <dbReference type="ChEBI" id="CHEBI:16452"/>
        <dbReference type="ChEBI" id="CHEBI:16526"/>
        <dbReference type="ChEBI" id="CHEBI:30616"/>
        <dbReference type="ChEBI" id="CHEBI:58702"/>
        <dbReference type="ChEBI" id="CHEBI:456216"/>
        <dbReference type="EC" id="4.1.1.49"/>
    </reaction>
</comment>
<comment type="cofactor">
    <cofactor evidence="1">
        <name>Mn(2+)</name>
        <dbReference type="ChEBI" id="CHEBI:29035"/>
    </cofactor>
    <text evidence="1">Binds 1 Mn(2+) ion per subunit.</text>
</comment>
<comment type="pathway">
    <text evidence="1">Carbohydrate biosynthesis; gluconeogenesis.</text>
</comment>
<comment type="subcellular location">
    <subcellularLocation>
        <location evidence="1">Cytoplasm</location>
    </subcellularLocation>
</comment>
<comment type="similarity">
    <text evidence="1">Belongs to the phosphoenolpyruvate carboxykinase (ATP) family.</text>
</comment>
<dbReference type="EC" id="4.1.1.49" evidence="1"/>
<dbReference type="EMBL" id="CP000490">
    <property type="protein sequence ID" value="ABL70936.1"/>
    <property type="molecule type" value="Genomic_DNA"/>
</dbReference>
<dbReference type="RefSeq" id="WP_011749127.1">
    <property type="nucleotide sequence ID" value="NC_008687.1"/>
</dbReference>
<dbReference type="SMR" id="A1B5Z2"/>
<dbReference type="STRING" id="318586.Pden_2852"/>
<dbReference type="EnsemblBacteria" id="ABL70936">
    <property type="protein sequence ID" value="ABL70936"/>
    <property type="gene ID" value="Pden_2852"/>
</dbReference>
<dbReference type="GeneID" id="93452532"/>
<dbReference type="KEGG" id="pde:Pden_2852"/>
<dbReference type="eggNOG" id="COG1866">
    <property type="taxonomic scope" value="Bacteria"/>
</dbReference>
<dbReference type="HOGENOM" id="CLU_018247_0_1_5"/>
<dbReference type="OrthoDB" id="9806325at2"/>
<dbReference type="UniPathway" id="UPA00138"/>
<dbReference type="Proteomes" id="UP000000361">
    <property type="component" value="Chromosome 2"/>
</dbReference>
<dbReference type="GO" id="GO:0005829">
    <property type="term" value="C:cytosol"/>
    <property type="evidence" value="ECO:0007669"/>
    <property type="project" value="TreeGrafter"/>
</dbReference>
<dbReference type="GO" id="GO:0005524">
    <property type="term" value="F:ATP binding"/>
    <property type="evidence" value="ECO:0007669"/>
    <property type="project" value="UniProtKB-UniRule"/>
</dbReference>
<dbReference type="GO" id="GO:0046872">
    <property type="term" value="F:metal ion binding"/>
    <property type="evidence" value="ECO:0007669"/>
    <property type="project" value="UniProtKB-KW"/>
</dbReference>
<dbReference type="GO" id="GO:0004612">
    <property type="term" value="F:phosphoenolpyruvate carboxykinase (ATP) activity"/>
    <property type="evidence" value="ECO:0007669"/>
    <property type="project" value="UniProtKB-UniRule"/>
</dbReference>
<dbReference type="GO" id="GO:0006094">
    <property type="term" value="P:gluconeogenesis"/>
    <property type="evidence" value="ECO:0007669"/>
    <property type="project" value="UniProtKB-UniRule"/>
</dbReference>
<dbReference type="CDD" id="cd00484">
    <property type="entry name" value="PEPCK_ATP"/>
    <property type="match status" value="1"/>
</dbReference>
<dbReference type="Gene3D" id="3.90.228.20">
    <property type="match status" value="1"/>
</dbReference>
<dbReference type="Gene3D" id="3.40.449.10">
    <property type="entry name" value="Phosphoenolpyruvate Carboxykinase, domain 1"/>
    <property type="match status" value="1"/>
</dbReference>
<dbReference type="Gene3D" id="2.170.8.10">
    <property type="entry name" value="Phosphoenolpyruvate Carboxykinase, domain 2"/>
    <property type="match status" value="1"/>
</dbReference>
<dbReference type="HAMAP" id="MF_00453">
    <property type="entry name" value="PEPCK_ATP"/>
    <property type="match status" value="1"/>
</dbReference>
<dbReference type="InterPro" id="IPR001272">
    <property type="entry name" value="PEP_carboxykinase_ATP"/>
</dbReference>
<dbReference type="InterPro" id="IPR013035">
    <property type="entry name" value="PEP_carboxykinase_C"/>
</dbReference>
<dbReference type="InterPro" id="IPR008210">
    <property type="entry name" value="PEP_carboxykinase_N"/>
</dbReference>
<dbReference type="InterPro" id="IPR015994">
    <property type="entry name" value="PEPCK_ATP_CS"/>
</dbReference>
<dbReference type="NCBIfam" id="TIGR00224">
    <property type="entry name" value="pckA"/>
    <property type="match status" value="1"/>
</dbReference>
<dbReference type="NCBIfam" id="NF006820">
    <property type="entry name" value="PRK09344.1-2"/>
    <property type="match status" value="1"/>
</dbReference>
<dbReference type="NCBIfam" id="NF006821">
    <property type="entry name" value="PRK09344.1-3"/>
    <property type="match status" value="1"/>
</dbReference>
<dbReference type="NCBIfam" id="NF006822">
    <property type="entry name" value="PRK09344.1-4"/>
    <property type="match status" value="1"/>
</dbReference>
<dbReference type="PANTHER" id="PTHR30031:SF0">
    <property type="entry name" value="PHOSPHOENOLPYRUVATE CARBOXYKINASE (ATP)"/>
    <property type="match status" value="1"/>
</dbReference>
<dbReference type="PANTHER" id="PTHR30031">
    <property type="entry name" value="PHOSPHOENOLPYRUVATE CARBOXYKINASE ATP"/>
    <property type="match status" value="1"/>
</dbReference>
<dbReference type="Pfam" id="PF01293">
    <property type="entry name" value="PEPCK_ATP"/>
    <property type="match status" value="1"/>
</dbReference>
<dbReference type="PIRSF" id="PIRSF006294">
    <property type="entry name" value="PEP_crbxkin"/>
    <property type="match status" value="1"/>
</dbReference>
<dbReference type="SUPFAM" id="SSF68923">
    <property type="entry name" value="PEP carboxykinase N-terminal domain"/>
    <property type="match status" value="1"/>
</dbReference>
<dbReference type="SUPFAM" id="SSF53795">
    <property type="entry name" value="PEP carboxykinase-like"/>
    <property type="match status" value="1"/>
</dbReference>
<dbReference type="PROSITE" id="PS00532">
    <property type="entry name" value="PEPCK_ATP"/>
    <property type="match status" value="1"/>
</dbReference>
<sequence>MTEPRVNPNCRLEDQGITGLGNVHYNLLEPALIDAAIQRGEGKLGLGGTFLVSTGAHTGRSPKDKHVVRTPAVEDSIWWENNRPMEPEAFDRLHADMLEHMKGKDYFVQDLYGGADPALRLDVRVVTELAWHGLFIRNLLRRPEASELAGFLPEFTIINCPSFKADPARHGCRSETVIALNFDKKLILIGNTAYAGENKKSVFTLLNYILPEKGVMPMHCSANHALGNPNDSAIFFGLSGTGKTTLSADPSRTLIGDDEHGWSDNGIFNFEGGCYAKTINLSAEAEPEIYATCFKFGTVIENMVYDPDTLELDFEDNSLTDNMRCAYPLEQISNASETSLGGQPRNVIMLTCDAYGVLPPIARLTPAQAMYHFLSGFTSKTPGTEVGVTEPTPTFSTCFGAPFMPRRPEVYGKLLQEKIAKTGAACWLVNTGWTGGAFGTGKRMPIKATRALLTAALDGSLNDAQFRKDPNFGFEVPVSVPGVEDKLLDPRQTWTDGAAYDAQARKLVGMFSDNFAQYADKIDDDVRAAAIG</sequence>
<gene>
    <name evidence="1" type="primary">pckA</name>
    <name type="ordered locus">Pden_2852</name>
</gene>
<feature type="chain" id="PRO_1000026335" description="Phosphoenolpyruvate carboxykinase (ATP)">
    <location>
        <begin position="1"/>
        <end position="532"/>
    </location>
</feature>
<feature type="binding site" evidence="1">
    <location>
        <position position="60"/>
    </location>
    <ligand>
        <name>substrate</name>
    </ligand>
</feature>
<feature type="binding site" evidence="1">
    <location>
        <position position="194"/>
    </location>
    <ligand>
        <name>substrate</name>
    </ligand>
</feature>
<feature type="binding site" evidence="1">
    <location>
        <position position="200"/>
    </location>
    <ligand>
        <name>ATP</name>
        <dbReference type="ChEBI" id="CHEBI:30616"/>
    </ligand>
</feature>
<feature type="binding site" evidence="1">
    <location>
        <position position="200"/>
    </location>
    <ligand>
        <name>Mn(2+)</name>
        <dbReference type="ChEBI" id="CHEBI:29035"/>
    </ligand>
</feature>
<feature type="binding site" evidence="1">
    <location>
        <position position="200"/>
    </location>
    <ligand>
        <name>substrate</name>
    </ligand>
</feature>
<feature type="binding site" evidence="1">
    <location>
        <position position="219"/>
    </location>
    <ligand>
        <name>ATP</name>
        <dbReference type="ChEBI" id="CHEBI:30616"/>
    </ligand>
</feature>
<feature type="binding site" evidence="1">
    <location>
        <position position="219"/>
    </location>
    <ligand>
        <name>Mn(2+)</name>
        <dbReference type="ChEBI" id="CHEBI:29035"/>
    </ligand>
</feature>
<feature type="binding site" evidence="1">
    <location>
        <begin position="237"/>
        <end position="245"/>
    </location>
    <ligand>
        <name>ATP</name>
        <dbReference type="ChEBI" id="CHEBI:30616"/>
    </ligand>
</feature>
<feature type="binding site" evidence="1">
    <location>
        <position position="258"/>
    </location>
    <ligand>
        <name>Mn(2+)</name>
        <dbReference type="ChEBI" id="CHEBI:29035"/>
    </ligand>
</feature>
<feature type="binding site" evidence="1">
    <location>
        <position position="286"/>
    </location>
    <ligand>
        <name>ATP</name>
        <dbReference type="ChEBI" id="CHEBI:30616"/>
    </ligand>
</feature>
<feature type="binding site" evidence="1">
    <location>
        <position position="324"/>
    </location>
    <ligand>
        <name>ATP</name>
        <dbReference type="ChEBI" id="CHEBI:30616"/>
    </ligand>
</feature>
<feature type="binding site" evidence="1">
    <location>
        <position position="324"/>
    </location>
    <ligand>
        <name>substrate</name>
    </ligand>
</feature>
<feature type="binding site" evidence="1">
    <location>
        <position position="449"/>
    </location>
    <ligand>
        <name>ATP</name>
        <dbReference type="ChEBI" id="CHEBI:30616"/>
    </ligand>
</feature>
<accession>A1B5Z2</accession>
<protein>
    <recommendedName>
        <fullName evidence="1">Phosphoenolpyruvate carboxykinase (ATP)</fullName>
        <shortName evidence="1">PCK</shortName>
        <shortName evidence="1">PEP carboxykinase</shortName>
        <shortName evidence="1">PEPCK</shortName>
        <ecNumber evidence="1">4.1.1.49</ecNumber>
    </recommendedName>
</protein>